<protein>
    <recommendedName>
        <fullName evidence="1">Imidazole glycerol phosphate synthase subunit HisF</fullName>
        <ecNumber evidence="1">4.3.2.10</ecNumber>
    </recommendedName>
    <alternativeName>
        <fullName evidence="1">IGP synthase cyclase subunit</fullName>
    </alternativeName>
    <alternativeName>
        <fullName evidence="1">IGP synthase subunit HisF</fullName>
    </alternativeName>
    <alternativeName>
        <fullName evidence="1">ImGP synthase subunit HisF</fullName>
        <shortName evidence="1">IGPS subunit HisF</shortName>
    </alternativeName>
</protein>
<gene>
    <name evidence="1" type="primary">hisF</name>
    <name type="ordered locus">CHY_1090</name>
</gene>
<feature type="chain" id="PRO_0000230125" description="Imidazole glycerol phosphate synthase subunit HisF">
    <location>
        <begin position="1"/>
        <end position="259"/>
    </location>
</feature>
<feature type="active site" evidence="1">
    <location>
        <position position="11"/>
    </location>
</feature>
<feature type="active site" evidence="1">
    <location>
        <position position="130"/>
    </location>
</feature>
<keyword id="KW-0028">Amino-acid biosynthesis</keyword>
<keyword id="KW-0963">Cytoplasm</keyword>
<keyword id="KW-0368">Histidine biosynthesis</keyword>
<keyword id="KW-0456">Lyase</keyword>
<keyword id="KW-1185">Reference proteome</keyword>
<evidence type="ECO:0000255" key="1">
    <source>
        <dbReference type="HAMAP-Rule" id="MF_01013"/>
    </source>
</evidence>
<organism>
    <name type="scientific">Carboxydothermus hydrogenoformans (strain ATCC BAA-161 / DSM 6008 / Z-2901)</name>
    <dbReference type="NCBI Taxonomy" id="246194"/>
    <lineage>
        <taxon>Bacteria</taxon>
        <taxon>Bacillati</taxon>
        <taxon>Bacillota</taxon>
        <taxon>Clostridia</taxon>
        <taxon>Thermoanaerobacterales</taxon>
        <taxon>Thermoanaerobacteraceae</taxon>
        <taxon>Carboxydothermus</taxon>
    </lineage>
</organism>
<dbReference type="EC" id="4.3.2.10" evidence="1"/>
<dbReference type="EMBL" id="CP000141">
    <property type="protein sequence ID" value="ABB15857.1"/>
    <property type="molecule type" value="Genomic_DNA"/>
</dbReference>
<dbReference type="RefSeq" id="WP_011344012.1">
    <property type="nucleotide sequence ID" value="NC_007503.1"/>
</dbReference>
<dbReference type="SMR" id="Q3AD48"/>
<dbReference type="FunCoup" id="Q3AD48">
    <property type="interactions" value="436"/>
</dbReference>
<dbReference type="STRING" id="246194.CHY_1090"/>
<dbReference type="KEGG" id="chy:CHY_1090"/>
<dbReference type="eggNOG" id="COG0107">
    <property type="taxonomic scope" value="Bacteria"/>
</dbReference>
<dbReference type="HOGENOM" id="CLU_048577_4_0_9"/>
<dbReference type="InParanoid" id="Q3AD48"/>
<dbReference type="OrthoDB" id="9781903at2"/>
<dbReference type="UniPathway" id="UPA00031">
    <property type="reaction ID" value="UER00010"/>
</dbReference>
<dbReference type="Proteomes" id="UP000002706">
    <property type="component" value="Chromosome"/>
</dbReference>
<dbReference type="GO" id="GO:0005737">
    <property type="term" value="C:cytoplasm"/>
    <property type="evidence" value="ECO:0007669"/>
    <property type="project" value="UniProtKB-SubCell"/>
</dbReference>
<dbReference type="GO" id="GO:0000107">
    <property type="term" value="F:imidazoleglycerol-phosphate synthase activity"/>
    <property type="evidence" value="ECO:0007669"/>
    <property type="project" value="UniProtKB-UniRule"/>
</dbReference>
<dbReference type="GO" id="GO:0016829">
    <property type="term" value="F:lyase activity"/>
    <property type="evidence" value="ECO:0007669"/>
    <property type="project" value="UniProtKB-KW"/>
</dbReference>
<dbReference type="GO" id="GO:0000105">
    <property type="term" value="P:L-histidine biosynthetic process"/>
    <property type="evidence" value="ECO:0007669"/>
    <property type="project" value="UniProtKB-UniRule"/>
</dbReference>
<dbReference type="CDD" id="cd04731">
    <property type="entry name" value="HisF"/>
    <property type="match status" value="1"/>
</dbReference>
<dbReference type="FunFam" id="3.20.20.70:FF:000006">
    <property type="entry name" value="Imidazole glycerol phosphate synthase subunit HisF"/>
    <property type="match status" value="1"/>
</dbReference>
<dbReference type="Gene3D" id="3.20.20.70">
    <property type="entry name" value="Aldolase class I"/>
    <property type="match status" value="1"/>
</dbReference>
<dbReference type="HAMAP" id="MF_01013">
    <property type="entry name" value="HisF"/>
    <property type="match status" value="1"/>
</dbReference>
<dbReference type="InterPro" id="IPR013785">
    <property type="entry name" value="Aldolase_TIM"/>
</dbReference>
<dbReference type="InterPro" id="IPR006062">
    <property type="entry name" value="His_biosynth"/>
</dbReference>
<dbReference type="InterPro" id="IPR004651">
    <property type="entry name" value="HisF"/>
</dbReference>
<dbReference type="InterPro" id="IPR050064">
    <property type="entry name" value="IGPS_HisA/HisF"/>
</dbReference>
<dbReference type="InterPro" id="IPR011060">
    <property type="entry name" value="RibuloseP-bd_barrel"/>
</dbReference>
<dbReference type="NCBIfam" id="TIGR00735">
    <property type="entry name" value="hisF"/>
    <property type="match status" value="1"/>
</dbReference>
<dbReference type="PANTHER" id="PTHR21235:SF2">
    <property type="entry name" value="IMIDAZOLE GLYCEROL PHOSPHATE SYNTHASE HISHF"/>
    <property type="match status" value="1"/>
</dbReference>
<dbReference type="PANTHER" id="PTHR21235">
    <property type="entry name" value="IMIDAZOLE GLYCEROL PHOSPHATE SYNTHASE SUBUNIT HISF/H IGP SYNTHASE SUBUNIT HISF/H"/>
    <property type="match status" value="1"/>
</dbReference>
<dbReference type="Pfam" id="PF00977">
    <property type="entry name" value="His_biosynth"/>
    <property type="match status" value="1"/>
</dbReference>
<dbReference type="SUPFAM" id="SSF51366">
    <property type="entry name" value="Ribulose-phoshate binding barrel"/>
    <property type="match status" value="1"/>
</dbReference>
<reference key="1">
    <citation type="journal article" date="2005" name="PLoS Genet.">
        <title>Life in hot carbon monoxide: the complete genome sequence of Carboxydothermus hydrogenoformans Z-2901.</title>
        <authorList>
            <person name="Wu M."/>
            <person name="Ren Q."/>
            <person name="Durkin A.S."/>
            <person name="Daugherty S.C."/>
            <person name="Brinkac L.M."/>
            <person name="Dodson R.J."/>
            <person name="Madupu R."/>
            <person name="Sullivan S.A."/>
            <person name="Kolonay J.F."/>
            <person name="Nelson W.C."/>
            <person name="Tallon L.J."/>
            <person name="Jones K.M."/>
            <person name="Ulrich L.E."/>
            <person name="Gonzalez J.M."/>
            <person name="Zhulin I.B."/>
            <person name="Robb F.T."/>
            <person name="Eisen J.A."/>
        </authorList>
    </citation>
    <scope>NUCLEOTIDE SEQUENCE [LARGE SCALE GENOMIC DNA]</scope>
    <source>
        <strain>ATCC BAA-161 / DSM 6008 / Z-2901</strain>
    </source>
</reference>
<accession>Q3AD48</accession>
<proteinExistence type="inferred from homology"/>
<sequence>MLTVRIIPCLDVNKGRVVKGVNFLNLVDAGDPVELAAFYDREGADEVVFLDITASFEGRQTMVEVAKRTATTLSIPFTIGGGIRNIDDIRALLASGADKVSINSAAVKNPELVREAALKFGSQCIVVAIDAKRKKDGGFEVYIHGGRTPTGIDAVEWAKEVERLGAGEILLTSMDRDGTKDGYDLELTREIADAVKIPVIASGGVGELSHFYEGVVLGHASALLAASVFHFGKFTIKEVKRYLKERGIPVRLGDTENGT</sequence>
<name>HIS6_CARHZ</name>
<comment type="function">
    <text evidence="1">IGPS catalyzes the conversion of PRFAR and glutamine to IGP, AICAR and glutamate. The HisF subunit catalyzes the cyclization activity that produces IGP and AICAR from PRFAR using the ammonia provided by the HisH subunit.</text>
</comment>
<comment type="catalytic activity">
    <reaction evidence="1">
        <text>5-[(5-phospho-1-deoxy-D-ribulos-1-ylimino)methylamino]-1-(5-phospho-beta-D-ribosyl)imidazole-4-carboxamide + L-glutamine = D-erythro-1-(imidazol-4-yl)glycerol 3-phosphate + 5-amino-1-(5-phospho-beta-D-ribosyl)imidazole-4-carboxamide + L-glutamate + H(+)</text>
        <dbReference type="Rhea" id="RHEA:24793"/>
        <dbReference type="ChEBI" id="CHEBI:15378"/>
        <dbReference type="ChEBI" id="CHEBI:29985"/>
        <dbReference type="ChEBI" id="CHEBI:58278"/>
        <dbReference type="ChEBI" id="CHEBI:58359"/>
        <dbReference type="ChEBI" id="CHEBI:58475"/>
        <dbReference type="ChEBI" id="CHEBI:58525"/>
        <dbReference type="EC" id="4.3.2.10"/>
    </reaction>
</comment>
<comment type="pathway">
    <text evidence="1">Amino-acid biosynthesis; L-histidine biosynthesis; L-histidine from 5-phospho-alpha-D-ribose 1-diphosphate: step 5/9.</text>
</comment>
<comment type="subunit">
    <text evidence="1">Heterodimer of HisH and HisF.</text>
</comment>
<comment type="subcellular location">
    <subcellularLocation>
        <location evidence="1">Cytoplasm</location>
    </subcellularLocation>
</comment>
<comment type="similarity">
    <text evidence="1">Belongs to the HisA/HisF family.</text>
</comment>